<evidence type="ECO:0000250" key="1"/>
<evidence type="ECO:0000250" key="2">
    <source>
        <dbReference type="UniProtKB" id="Q8LAS7"/>
    </source>
</evidence>
<evidence type="ECO:0000255" key="3">
    <source>
        <dbReference type="PROSITE-ProRule" id="PRU00448"/>
    </source>
</evidence>
<evidence type="ECO:0000269" key="4">
    <source>
    </source>
</evidence>
<evidence type="ECO:0000269" key="5">
    <source>
    </source>
</evidence>
<evidence type="ECO:0000305" key="6"/>
<reference key="1">
    <citation type="journal article" date="2000" name="Plant Physiol.">
        <title>Interaction specificity of Arabidopsis calcineurin B-like calcium sensors and their target kinases.</title>
        <authorList>
            <person name="Kim K.-N."/>
            <person name="Cheong Y.H."/>
            <person name="Gupta R."/>
            <person name="Luan S."/>
        </authorList>
    </citation>
    <scope>NUCLEOTIDE SEQUENCE [MRNA]</scope>
    <source>
        <strain>cv. Columbia</strain>
    </source>
</reference>
<reference key="2">
    <citation type="journal article" date="1999" name="Nature">
        <title>Sequence and analysis of chromosome 4 of the plant Arabidopsis thaliana.</title>
        <authorList>
            <person name="Mayer K.F.X."/>
            <person name="Schueller C."/>
            <person name="Wambutt R."/>
            <person name="Murphy G."/>
            <person name="Volckaert G."/>
            <person name="Pohl T."/>
            <person name="Duesterhoeft A."/>
            <person name="Stiekema W."/>
            <person name="Entian K.-D."/>
            <person name="Terryn N."/>
            <person name="Harris B."/>
            <person name="Ansorge W."/>
            <person name="Brandt P."/>
            <person name="Grivell L.A."/>
            <person name="Rieger M."/>
            <person name="Weichselgartner M."/>
            <person name="de Simone V."/>
            <person name="Obermaier B."/>
            <person name="Mache R."/>
            <person name="Mueller M."/>
            <person name="Kreis M."/>
            <person name="Delseny M."/>
            <person name="Puigdomenech P."/>
            <person name="Watson M."/>
            <person name="Schmidtheini T."/>
            <person name="Reichert B."/>
            <person name="Portetelle D."/>
            <person name="Perez-Alonso M."/>
            <person name="Boutry M."/>
            <person name="Bancroft I."/>
            <person name="Vos P."/>
            <person name="Hoheisel J."/>
            <person name="Zimmermann W."/>
            <person name="Wedler H."/>
            <person name="Ridley P."/>
            <person name="Langham S.-A."/>
            <person name="McCullagh B."/>
            <person name="Bilham L."/>
            <person name="Robben J."/>
            <person name="van der Schueren J."/>
            <person name="Grymonprez B."/>
            <person name="Chuang Y.-J."/>
            <person name="Vandenbussche F."/>
            <person name="Braeken M."/>
            <person name="Weltjens I."/>
            <person name="Voet M."/>
            <person name="Bastiaens I."/>
            <person name="Aert R."/>
            <person name="Defoor E."/>
            <person name="Weitzenegger T."/>
            <person name="Bothe G."/>
            <person name="Ramsperger U."/>
            <person name="Hilbert H."/>
            <person name="Braun M."/>
            <person name="Holzer E."/>
            <person name="Brandt A."/>
            <person name="Peters S."/>
            <person name="van Staveren M."/>
            <person name="Dirkse W."/>
            <person name="Mooijman P."/>
            <person name="Klein Lankhorst R."/>
            <person name="Rose M."/>
            <person name="Hauf J."/>
            <person name="Koetter P."/>
            <person name="Berneiser S."/>
            <person name="Hempel S."/>
            <person name="Feldpausch M."/>
            <person name="Lamberth S."/>
            <person name="Van den Daele H."/>
            <person name="De Keyser A."/>
            <person name="Buysshaert C."/>
            <person name="Gielen J."/>
            <person name="Villarroel R."/>
            <person name="De Clercq R."/>
            <person name="van Montagu M."/>
            <person name="Rogers J."/>
            <person name="Cronin A."/>
            <person name="Quail M.A."/>
            <person name="Bray-Allen S."/>
            <person name="Clark L."/>
            <person name="Doggett J."/>
            <person name="Hall S."/>
            <person name="Kay M."/>
            <person name="Lennard N."/>
            <person name="McLay K."/>
            <person name="Mayes R."/>
            <person name="Pettett A."/>
            <person name="Rajandream M.A."/>
            <person name="Lyne M."/>
            <person name="Benes V."/>
            <person name="Rechmann S."/>
            <person name="Borkova D."/>
            <person name="Bloecker H."/>
            <person name="Scharfe M."/>
            <person name="Grimm M."/>
            <person name="Loehnert T.-H."/>
            <person name="Dose S."/>
            <person name="de Haan M."/>
            <person name="Maarse A.C."/>
            <person name="Schaefer M."/>
            <person name="Mueller-Auer S."/>
            <person name="Gabel C."/>
            <person name="Fuchs M."/>
            <person name="Fartmann B."/>
            <person name="Granderath K."/>
            <person name="Dauner D."/>
            <person name="Herzl A."/>
            <person name="Neumann S."/>
            <person name="Argiriou A."/>
            <person name="Vitale D."/>
            <person name="Liguori R."/>
            <person name="Piravandi E."/>
            <person name="Massenet O."/>
            <person name="Quigley F."/>
            <person name="Clabauld G."/>
            <person name="Muendlein A."/>
            <person name="Felber R."/>
            <person name="Schnabl S."/>
            <person name="Hiller R."/>
            <person name="Schmidt W."/>
            <person name="Lecharny A."/>
            <person name="Aubourg S."/>
            <person name="Chefdor F."/>
            <person name="Cooke R."/>
            <person name="Berger C."/>
            <person name="Monfort A."/>
            <person name="Casacuberta E."/>
            <person name="Gibbons T."/>
            <person name="Weber N."/>
            <person name="Vandenbol M."/>
            <person name="Bargues M."/>
            <person name="Terol J."/>
            <person name="Torres A."/>
            <person name="Perez-Perez A."/>
            <person name="Purnelle B."/>
            <person name="Bent E."/>
            <person name="Johnson S."/>
            <person name="Tacon D."/>
            <person name="Jesse T."/>
            <person name="Heijnen L."/>
            <person name="Schwarz S."/>
            <person name="Scholler P."/>
            <person name="Heber S."/>
            <person name="Francs P."/>
            <person name="Bielke C."/>
            <person name="Frishman D."/>
            <person name="Haase D."/>
            <person name="Lemcke K."/>
            <person name="Mewes H.-W."/>
            <person name="Stocker S."/>
            <person name="Zaccaria P."/>
            <person name="Bevan M."/>
            <person name="Wilson R.K."/>
            <person name="de la Bastide M."/>
            <person name="Habermann K."/>
            <person name="Parnell L."/>
            <person name="Dedhia N."/>
            <person name="Gnoj L."/>
            <person name="Schutz K."/>
            <person name="Huang E."/>
            <person name="Spiegel L."/>
            <person name="Sekhon M."/>
            <person name="Murray J."/>
            <person name="Sheet P."/>
            <person name="Cordes M."/>
            <person name="Abu-Threideh J."/>
            <person name="Stoneking T."/>
            <person name="Kalicki J."/>
            <person name="Graves T."/>
            <person name="Harmon G."/>
            <person name="Edwards J."/>
            <person name="Latreille P."/>
            <person name="Courtney L."/>
            <person name="Cloud J."/>
            <person name="Abbott A."/>
            <person name="Scott K."/>
            <person name="Johnson D."/>
            <person name="Minx P."/>
            <person name="Bentley D."/>
            <person name="Fulton B."/>
            <person name="Miller N."/>
            <person name="Greco T."/>
            <person name="Kemp K."/>
            <person name="Kramer J."/>
            <person name="Fulton L."/>
            <person name="Mardis E."/>
            <person name="Dante M."/>
            <person name="Pepin K."/>
            <person name="Hillier L.W."/>
            <person name="Nelson J."/>
            <person name="Spieth J."/>
            <person name="Ryan E."/>
            <person name="Andrews S."/>
            <person name="Geisel C."/>
            <person name="Layman D."/>
            <person name="Du H."/>
            <person name="Ali J."/>
            <person name="Berghoff A."/>
            <person name="Jones K."/>
            <person name="Drone K."/>
            <person name="Cotton M."/>
            <person name="Joshu C."/>
            <person name="Antonoiu B."/>
            <person name="Zidanic M."/>
            <person name="Strong C."/>
            <person name="Sun H."/>
            <person name="Lamar B."/>
            <person name="Yordan C."/>
            <person name="Ma P."/>
            <person name="Zhong J."/>
            <person name="Preston R."/>
            <person name="Vil D."/>
            <person name="Shekher M."/>
            <person name="Matero A."/>
            <person name="Shah R."/>
            <person name="Swaby I.K."/>
            <person name="O'Shaughnessy A."/>
            <person name="Rodriguez M."/>
            <person name="Hoffman J."/>
            <person name="Till S."/>
            <person name="Granat S."/>
            <person name="Shohdy N."/>
            <person name="Hasegawa A."/>
            <person name="Hameed A."/>
            <person name="Lodhi M."/>
            <person name="Johnson A."/>
            <person name="Chen E."/>
            <person name="Marra M.A."/>
            <person name="Martienssen R."/>
            <person name="McCombie W.R."/>
        </authorList>
    </citation>
    <scope>NUCLEOTIDE SEQUENCE [LARGE SCALE GENOMIC DNA]</scope>
    <source>
        <strain>cv. Columbia</strain>
    </source>
</reference>
<reference key="3">
    <citation type="journal article" date="2017" name="Plant J.">
        <title>Araport11: a complete reannotation of the Arabidopsis thaliana reference genome.</title>
        <authorList>
            <person name="Cheng C.Y."/>
            <person name="Krishnakumar V."/>
            <person name="Chan A.P."/>
            <person name="Thibaud-Nissen F."/>
            <person name="Schobel S."/>
            <person name="Town C.D."/>
        </authorList>
    </citation>
    <scope>GENOME REANNOTATION</scope>
    <source>
        <strain>cv. Columbia</strain>
    </source>
</reference>
<reference key="4">
    <citation type="journal article" date="2004" name="Plant Physiol.">
        <title>Calcium sensors and their interacting protein kinases: genomics of the Arabidopsis and rice CBL-CIPK signaling networks.</title>
        <authorList>
            <person name="Kolukisaoglu U."/>
            <person name="Weinl S."/>
            <person name="Blazevic D."/>
            <person name="Batistic O."/>
            <person name="Kudla J."/>
        </authorList>
    </citation>
    <scope>GENE FAMILY</scope>
</reference>
<reference key="5">
    <citation type="journal article" date="2010" name="Plant J.">
        <title>CBL-mediated targeting of CIPKs facilitates the decoding of calcium signals emanating from distinct cellular stores.</title>
        <authorList>
            <person name="Batistic O."/>
            <person name="Waadt R."/>
            <person name="Steinhorst L."/>
            <person name="Held K."/>
            <person name="Kudla J."/>
        </authorList>
    </citation>
    <scope>SUBCELLULAR LOCATION</scope>
</reference>
<reference key="6">
    <citation type="journal article" date="2011" name="Mol. Plant">
        <title>Mechanistic analysis of AKT1 regulation by the CBL-CIPK-PP2CA interactions.</title>
        <authorList>
            <person name="Lan W.Z."/>
            <person name="Lee S.C."/>
            <person name="Che Y.F."/>
            <person name="Jiang Y.Q."/>
            <person name="Luan S."/>
        </authorList>
    </citation>
    <scope>INTERACTION WITH PP2CA</scope>
</reference>
<sequence length="214" mass="24404">MDSTRNSASSNSTGCFTDQKKRKALYEVFKKLSGVDCQRNEGNVVEGVTCYYGEMNKEQFHVAIFQTDKNESLFSERVFDLFDTNHDGLLGFEEFARALSVFHPSAPIDDKIDLSFQLYDLKQQGFIERQGVKQLVVATLAASGMSQSDEIVESIIDKTFVQADTKHEGMIDEEEWMDLVFRHPLLLKNMTLQYLKDITTTFPSFVLHSQVEDT</sequence>
<proteinExistence type="evidence at protein level"/>
<dbReference type="EMBL" id="AF290434">
    <property type="protein sequence ID" value="AAG10059.1"/>
    <property type="molecule type" value="mRNA"/>
</dbReference>
<dbReference type="EMBL" id="AL022223">
    <property type="protein sequence ID" value="CAA18214.1"/>
    <property type="status" value="ALT_SEQ"/>
    <property type="molecule type" value="Genomic_DNA"/>
</dbReference>
<dbReference type="EMBL" id="AL078465">
    <property type="protein sequence ID" value="CAB43852.1"/>
    <property type="molecule type" value="Genomic_DNA"/>
</dbReference>
<dbReference type="EMBL" id="AL161565">
    <property type="protein sequence ID" value="CAB79511.1"/>
    <property type="molecule type" value="Genomic_DNA"/>
</dbReference>
<dbReference type="EMBL" id="CP002687">
    <property type="protein sequence ID" value="AEE85219.1"/>
    <property type="molecule type" value="Genomic_DNA"/>
</dbReference>
<dbReference type="PIR" id="T05048">
    <property type="entry name" value="T05048"/>
</dbReference>
<dbReference type="PIR" id="T08922">
    <property type="entry name" value="T08922"/>
</dbReference>
<dbReference type="RefSeq" id="NP_194386.1">
    <property type="nucleotide sequence ID" value="NM_118790.2"/>
</dbReference>
<dbReference type="SMR" id="Q9SUA6"/>
<dbReference type="BioGRID" id="14050">
    <property type="interactions" value="5"/>
</dbReference>
<dbReference type="FunCoup" id="Q9SUA6">
    <property type="interactions" value="321"/>
</dbReference>
<dbReference type="IntAct" id="Q9SUA6">
    <property type="interactions" value="1"/>
</dbReference>
<dbReference type="STRING" id="3702.Q9SUA6"/>
<dbReference type="PaxDb" id="3702-AT4G26560.1"/>
<dbReference type="ProteomicsDB" id="220288"/>
<dbReference type="EnsemblPlants" id="AT4G26560.1">
    <property type="protein sequence ID" value="AT4G26560.1"/>
    <property type="gene ID" value="AT4G26560"/>
</dbReference>
<dbReference type="GeneID" id="828763"/>
<dbReference type="Gramene" id="AT4G26560.1">
    <property type="protein sequence ID" value="AT4G26560.1"/>
    <property type="gene ID" value="AT4G26560"/>
</dbReference>
<dbReference type="KEGG" id="ath:AT4G26560"/>
<dbReference type="Araport" id="AT4G26560"/>
<dbReference type="TAIR" id="AT4G26560">
    <property type="gene designation" value="CBL7"/>
</dbReference>
<dbReference type="eggNOG" id="KOG0034">
    <property type="taxonomic scope" value="Eukaryota"/>
</dbReference>
<dbReference type="HOGENOM" id="CLU_061288_21_0_1"/>
<dbReference type="InParanoid" id="Q9SUA6"/>
<dbReference type="OrthoDB" id="191686at2759"/>
<dbReference type="PhylomeDB" id="Q9SUA6"/>
<dbReference type="PRO" id="PR:Q9SUA6"/>
<dbReference type="Proteomes" id="UP000006548">
    <property type="component" value="Chromosome 4"/>
</dbReference>
<dbReference type="ExpressionAtlas" id="Q9SUA6">
    <property type="expression patterns" value="baseline and differential"/>
</dbReference>
<dbReference type="GO" id="GO:0005737">
    <property type="term" value="C:cytoplasm"/>
    <property type="evidence" value="ECO:0000314"/>
    <property type="project" value="TAIR"/>
</dbReference>
<dbReference type="GO" id="GO:0005634">
    <property type="term" value="C:nucleus"/>
    <property type="evidence" value="ECO:0007669"/>
    <property type="project" value="UniProtKB-SubCell"/>
</dbReference>
<dbReference type="GO" id="GO:0005886">
    <property type="term" value="C:plasma membrane"/>
    <property type="evidence" value="ECO:0000314"/>
    <property type="project" value="TAIR"/>
</dbReference>
<dbReference type="GO" id="GO:0005509">
    <property type="term" value="F:calcium ion binding"/>
    <property type="evidence" value="ECO:0000250"/>
    <property type="project" value="TAIR"/>
</dbReference>
<dbReference type="GO" id="GO:0019900">
    <property type="term" value="F:kinase binding"/>
    <property type="evidence" value="ECO:0007669"/>
    <property type="project" value="InterPro"/>
</dbReference>
<dbReference type="GO" id="GO:0019722">
    <property type="term" value="P:calcium-mediated signaling"/>
    <property type="evidence" value="ECO:0007669"/>
    <property type="project" value="InterPro"/>
</dbReference>
<dbReference type="GO" id="GO:0005513">
    <property type="term" value="P:detection of calcium ion"/>
    <property type="evidence" value="ECO:0000250"/>
    <property type="project" value="TAIR"/>
</dbReference>
<dbReference type="GO" id="GO:0032780">
    <property type="term" value="P:negative regulation of ATP-dependent activity"/>
    <property type="evidence" value="ECO:0000314"/>
    <property type="project" value="TAIR"/>
</dbReference>
<dbReference type="GO" id="GO:0010446">
    <property type="term" value="P:response to alkaline pH"/>
    <property type="evidence" value="ECO:0000315"/>
    <property type="project" value="TAIR"/>
</dbReference>
<dbReference type="FunFam" id="1.10.238.10:FF:000073">
    <property type="entry name" value="calcineurin B-like protein 3"/>
    <property type="match status" value="1"/>
</dbReference>
<dbReference type="Gene3D" id="1.10.238.10">
    <property type="entry name" value="EF-hand"/>
    <property type="match status" value="1"/>
</dbReference>
<dbReference type="InterPro" id="IPR045198">
    <property type="entry name" value="CNBL1-10"/>
</dbReference>
<dbReference type="InterPro" id="IPR011992">
    <property type="entry name" value="EF-hand-dom_pair"/>
</dbReference>
<dbReference type="InterPro" id="IPR018247">
    <property type="entry name" value="EF_Hand_1_Ca_BS"/>
</dbReference>
<dbReference type="InterPro" id="IPR002048">
    <property type="entry name" value="EF_hand_dom"/>
</dbReference>
<dbReference type="PANTHER" id="PTHR23056">
    <property type="entry name" value="CALCINEURIN B"/>
    <property type="match status" value="1"/>
</dbReference>
<dbReference type="PANTHER" id="PTHR23056:SF116">
    <property type="entry name" value="CALCINEURIN B-LIKE PROTEIN 3-RELATED"/>
    <property type="match status" value="1"/>
</dbReference>
<dbReference type="Pfam" id="PF13202">
    <property type="entry name" value="EF-hand_5"/>
    <property type="match status" value="1"/>
</dbReference>
<dbReference type="Pfam" id="PF13499">
    <property type="entry name" value="EF-hand_7"/>
    <property type="match status" value="1"/>
</dbReference>
<dbReference type="PRINTS" id="PR00450">
    <property type="entry name" value="RECOVERIN"/>
</dbReference>
<dbReference type="SMART" id="SM00054">
    <property type="entry name" value="EFh"/>
    <property type="match status" value="2"/>
</dbReference>
<dbReference type="SUPFAM" id="SSF47473">
    <property type="entry name" value="EF-hand"/>
    <property type="match status" value="1"/>
</dbReference>
<dbReference type="PROSITE" id="PS00018">
    <property type="entry name" value="EF_HAND_1"/>
    <property type="match status" value="1"/>
</dbReference>
<dbReference type="PROSITE" id="PS50222">
    <property type="entry name" value="EF_HAND_2"/>
    <property type="match status" value="3"/>
</dbReference>
<gene>
    <name type="primary">CBL7</name>
    <name type="synonym">SCABP3</name>
    <name type="ordered locus">At4g26560</name>
    <name type="ORF">M3E9.10</name>
    <name type="ORF">T15N24_10</name>
</gene>
<name>CNBL7_ARATH</name>
<keyword id="KW-0106">Calcium</keyword>
<keyword id="KW-0963">Cytoplasm</keyword>
<keyword id="KW-0479">Metal-binding</keyword>
<keyword id="KW-0539">Nucleus</keyword>
<keyword id="KW-0597">Phosphoprotein</keyword>
<keyword id="KW-1185">Reference proteome</keyword>
<keyword id="KW-0677">Repeat</keyword>
<protein>
    <recommendedName>
        <fullName>Calcineurin B-like protein 7</fullName>
    </recommendedName>
    <alternativeName>
        <fullName>SOS3-like calcium-binding protein 3</fullName>
    </alternativeName>
</protein>
<accession>Q9SUA6</accession>
<accession>O65578</accession>
<comment type="function">
    <text>Acts as a calcium sensor. CBL proteins interact with CIPK serine-threonine protein kinases. Binding of a CBL protein to the regulatory NAF domain of a CIPK protein lead to the activation of the kinase in a calcium-dependent manner.</text>
</comment>
<comment type="subunit">
    <text evidence="1 5">Homodimer (By similarity). Interacts with PP2CA.</text>
</comment>
<comment type="subcellular location">
    <subcellularLocation>
        <location evidence="4">Cytoplasm</location>
    </subcellularLocation>
    <subcellularLocation>
        <location evidence="4">Nucleus</location>
    </subcellularLocation>
</comment>
<comment type="similarity">
    <text evidence="6">Belongs to the calcineurin regulatory subunit family.</text>
</comment>
<comment type="sequence caution" evidence="6">
    <conflict type="erroneous gene model prediction">
        <sequence resource="EMBL-CDS" id="CAA18214"/>
    </conflict>
</comment>
<organism>
    <name type="scientific">Arabidopsis thaliana</name>
    <name type="common">Mouse-ear cress</name>
    <dbReference type="NCBI Taxonomy" id="3702"/>
    <lineage>
        <taxon>Eukaryota</taxon>
        <taxon>Viridiplantae</taxon>
        <taxon>Streptophyta</taxon>
        <taxon>Embryophyta</taxon>
        <taxon>Tracheophyta</taxon>
        <taxon>Spermatophyta</taxon>
        <taxon>Magnoliopsida</taxon>
        <taxon>eudicotyledons</taxon>
        <taxon>Gunneridae</taxon>
        <taxon>Pentapetalae</taxon>
        <taxon>rosids</taxon>
        <taxon>malvids</taxon>
        <taxon>Brassicales</taxon>
        <taxon>Brassicaceae</taxon>
        <taxon>Camelineae</taxon>
        <taxon>Arabidopsis</taxon>
    </lineage>
</organism>
<feature type="chain" id="PRO_0000073508" description="Calcineurin B-like protein 7">
    <location>
        <begin position="1"/>
        <end position="214"/>
    </location>
</feature>
<feature type="domain" description="EF-hand 1" evidence="6">
    <location>
        <begin position="33"/>
        <end position="69"/>
    </location>
</feature>
<feature type="domain" description="EF-hand 2" evidence="3">
    <location>
        <begin position="70"/>
        <end position="105"/>
    </location>
</feature>
<feature type="domain" description="EF-hand 3" evidence="3">
    <location>
        <begin position="107"/>
        <end position="142"/>
    </location>
</feature>
<feature type="domain" description="EF-hand 4" evidence="3">
    <location>
        <begin position="151"/>
        <end position="186"/>
    </location>
</feature>
<feature type="binding site" evidence="3">
    <location>
        <position position="83"/>
    </location>
    <ligand>
        <name>Ca(2+)</name>
        <dbReference type="ChEBI" id="CHEBI:29108"/>
    </ligand>
</feature>
<feature type="binding site" evidence="3">
    <location>
        <position position="85"/>
    </location>
    <ligand>
        <name>Ca(2+)</name>
        <dbReference type="ChEBI" id="CHEBI:29108"/>
    </ligand>
</feature>
<feature type="binding site" evidence="3">
    <location>
        <position position="87"/>
    </location>
    <ligand>
        <name>Ca(2+)</name>
        <dbReference type="ChEBI" id="CHEBI:29108"/>
    </ligand>
</feature>
<feature type="binding site" evidence="3">
    <location>
        <position position="94"/>
    </location>
    <ligand>
        <name>Ca(2+)</name>
        <dbReference type="ChEBI" id="CHEBI:29108"/>
    </ligand>
</feature>
<feature type="site" description="Involved in dimerization" evidence="1">
    <location>
        <position position="143"/>
    </location>
</feature>
<feature type="modified residue" description="Phosphoserine" evidence="2">
    <location>
        <position position="204"/>
    </location>
</feature>